<reference key="1">
    <citation type="submission" date="2007-10" db="EMBL/GenBank/DDBJ databases">
        <title>Complete genome of Alkaliphilus oremlandii OhILAs.</title>
        <authorList>
            <person name="Copeland A."/>
            <person name="Lucas S."/>
            <person name="Lapidus A."/>
            <person name="Barry K."/>
            <person name="Detter J.C."/>
            <person name="Glavina del Rio T."/>
            <person name="Hammon N."/>
            <person name="Israni S."/>
            <person name="Dalin E."/>
            <person name="Tice H."/>
            <person name="Pitluck S."/>
            <person name="Chain P."/>
            <person name="Malfatti S."/>
            <person name="Shin M."/>
            <person name="Vergez L."/>
            <person name="Schmutz J."/>
            <person name="Larimer F."/>
            <person name="Land M."/>
            <person name="Hauser L."/>
            <person name="Kyrpides N."/>
            <person name="Mikhailova N."/>
            <person name="Stolz J.F."/>
            <person name="Dawson A."/>
            <person name="Fisher E."/>
            <person name="Crable B."/>
            <person name="Perera E."/>
            <person name="Lisak J."/>
            <person name="Ranganathan M."/>
            <person name="Basu P."/>
            <person name="Richardson P."/>
        </authorList>
    </citation>
    <scope>NUCLEOTIDE SEQUENCE [LARGE SCALE GENOMIC DNA]</scope>
    <source>
        <strain>OhILAs</strain>
    </source>
</reference>
<evidence type="ECO:0000255" key="1">
    <source>
        <dbReference type="HAMAP-Rule" id="MF_00048"/>
    </source>
</evidence>
<feature type="chain" id="PRO_0000336118" description="UPF0102 protein Clos_1471">
    <location>
        <begin position="1"/>
        <end position="117"/>
    </location>
</feature>
<proteinExistence type="inferred from homology"/>
<name>Y1471_ALKOO</name>
<organism>
    <name type="scientific">Alkaliphilus oremlandii (strain OhILAs)</name>
    <name type="common">Clostridium oremlandii (strain OhILAs)</name>
    <dbReference type="NCBI Taxonomy" id="350688"/>
    <lineage>
        <taxon>Bacteria</taxon>
        <taxon>Bacillati</taxon>
        <taxon>Bacillota</taxon>
        <taxon>Clostridia</taxon>
        <taxon>Peptostreptococcales</taxon>
        <taxon>Natronincolaceae</taxon>
        <taxon>Alkaliphilus</taxon>
    </lineage>
</organism>
<protein>
    <recommendedName>
        <fullName evidence="1">UPF0102 protein Clos_1471</fullName>
    </recommendedName>
</protein>
<comment type="similarity">
    <text evidence="1">Belongs to the UPF0102 family.</text>
</comment>
<gene>
    <name type="ordered locus">Clos_1471</name>
</gene>
<accession>A8MHC8</accession>
<dbReference type="EMBL" id="CP000853">
    <property type="protein sequence ID" value="ABW19015.1"/>
    <property type="molecule type" value="Genomic_DNA"/>
</dbReference>
<dbReference type="RefSeq" id="WP_012159327.1">
    <property type="nucleotide sequence ID" value="NC_009922.1"/>
</dbReference>
<dbReference type="SMR" id="A8MHC8"/>
<dbReference type="STRING" id="350688.Clos_1471"/>
<dbReference type="KEGG" id="aoe:Clos_1471"/>
<dbReference type="eggNOG" id="COG0792">
    <property type="taxonomic scope" value="Bacteria"/>
</dbReference>
<dbReference type="HOGENOM" id="CLU_115353_2_1_9"/>
<dbReference type="OrthoDB" id="9802516at2"/>
<dbReference type="Proteomes" id="UP000000269">
    <property type="component" value="Chromosome"/>
</dbReference>
<dbReference type="GO" id="GO:0003676">
    <property type="term" value="F:nucleic acid binding"/>
    <property type="evidence" value="ECO:0007669"/>
    <property type="project" value="InterPro"/>
</dbReference>
<dbReference type="CDD" id="cd20736">
    <property type="entry name" value="PoNe_Nuclease"/>
    <property type="match status" value="1"/>
</dbReference>
<dbReference type="Gene3D" id="3.40.1350.10">
    <property type="match status" value="1"/>
</dbReference>
<dbReference type="HAMAP" id="MF_00048">
    <property type="entry name" value="UPF0102"/>
    <property type="match status" value="1"/>
</dbReference>
<dbReference type="InterPro" id="IPR011335">
    <property type="entry name" value="Restrct_endonuc-II-like"/>
</dbReference>
<dbReference type="InterPro" id="IPR011856">
    <property type="entry name" value="tRNA_endonuc-like_dom_sf"/>
</dbReference>
<dbReference type="InterPro" id="IPR003509">
    <property type="entry name" value="UPF0102_YraN-like"/>
</dbReference>
<dbReference type="NCBIfam" id="NF009150">
    <property type="entry name" value="PRK12497.1-3"/>
    <property type="match status" value="1"/>
</dbReference>
<dbReference type="NCBIfam" id="NF009154">
    <property type="entry name" value="PRK12497.3-3"/>
    <property type="match status" value="1"/>
</dbReference>
<dbReference type="NCBIfam" id="TIGR00252">
    <property type="entry name" value="YraN family protein"/>
    <property type="match status" value="1"/>
</dbReference>
<dbReference type="PANTHER" id="PTHR34039">
    <property type="entry name" value="UPF0102 PROTEIN YRAN"/>
    <property type="match status" value="1"/>
</dbReference>
<dbReference type="PANTHER" id="PTHR34039:SF1">
    <property type="entry name" value="UPF0102 PROTEIN YRAN"/>
    <property type="match status" value="1"/>
</dbReference>
<dbReference type="Pfam" id="PF02021">
    <property type="entry name" value="UPF0102"/>
    <property type="match status" value="1"/>
</dbReference>
<dbReference type="SUPFAM" id="SSF52980">
    <property type="entry name" value="Restriction endonuclease-like"/>
    <property type="match status" value="1"/>
</dbReference>
<keyword id="KW-1185">Reference proteome</keyword>
<sequence length="117" mass="13612">MNKKIGAIGEQLAVHYLKNKGYRILDCNYRTRLGEIDIIAILNDTIVFVEVKTRSSGAFGTPSEAVNYKKQMTIRRVSQQYLLSNRIGEDDWNLRFDVIEVQLIEKKYKINHMENAF</sequence>